<proteinExistence type="evidence at protein level"/>
<organism>
    <name type="scientific">Oryza sativa subsp. japonica</name>
    <name type="common">Rice</name>
    <dbReference type="NCBI Taxonomy" id="39947"/>
    <lineage>
        <taxon>Eukaryota</taxon>
        <taxon>Viridiplantae</taxon>
        <taxon>Streptophyta</taxon>
        <taxon>Embryophyta</taxon>
        <taxon>Tracheophyta</taxon>
        <taxon>Spermatophyta</taxon>
        <taxon>Magnoliopsida</taxon>
        <taxon>Liliopsida</taxon>
        <taxon>Poales</taxon>
        <taxon>Poaceae</taxon>
        <taxon>BOP clade</taxon>
        <taxon>Oryzoideae</taxon>
        <taxon>Oryzeae</taxon>
        <taxon>Oryzinae</taxon>
        <taxon>Oryza</taxon>
        <taxon>Oryza sativa</taxon>
    </lineage>
</organism>
<accession>A3C5V6</accession>
<accession>O23811</accession>
<accession>Q7X795</accession>
<protein>
    <recommendedName>
        <fullName evidence="6">Type III polyketide synthase 21</fullName>
        <shortName evidence="6">OsPKS21</shortName>
        <ecNumber evidence="2">2.3.1.-</ecNumber>
    </recommendedName>
    <alternativeName>
        <fullName evidence="5">Type III polyketide synthase 1</fullName>
        <shortName evidence="5">OsPKS1</shortName>
    </alternativeName>
</protein>
<comment type="function">
    <text evidence="2">Plant type III polyketide synthases (PKSs) that catalyzes the condensation of fatty acyl-CoA with malonyl-CoA to generate triketide and tetraketide alpha-pyrones, the main components of pollen exine and potential sporopollenin precursors.</text>
</comment>
<comment type="tissue specificity">
    <text evidence="3 4">Expressed in anthers (PubMed:8704128). Expressed in young and adult flowers (PubMed:27878652).</text>
</comment>
<comment type="disruption phenotype">
    <text evidence="2">Small pollen grains with irregular shape (PubMed:23231646). Reduced spikelet fertility and mature seed formation (PubMed:23231646).</text>
</comment>
<comment type="similarity">
    <text evidence="7">Belongs to the thiolase-like superfamily. Chalcone/stilbene synthases family.</text>
</comment>
<keyword id="KW-0012">Acyltransferase</keyword>
<keyword id="KW-1185">Reference proteome</keyword>
<keyword id="KW-0808">Transferase</keyword>
<sequence>MADLGFGDARSGNGSRSQCSRGKAMLLALGKGLPEQVLPQEKVVETYLQDTICDDPATRAKLERLCKTTTVRTRYTVMSKELLDEHPELRTEGTPTLTPRLDICNAAVLELGATAARAALGEWGRPAADITHLVYISSSELRLPGGDLFLATRLGLHPNTVRTSLLFLGCSGGAAALRTAKDIAENNPGSRVLVVAAETTVLGFRPPSPDRPYDLVGAALFGDGASAAIIGAGPIAAEESPFLELQFSTQEFLPGTDKVIDGKITEEGINFKLGRDLPEKIENRIEGFCRTLMDRVGIKEFNDVFWAVHPGGPAILNRLEVCLELQPEKLKISRKALMNYGNVSSNTVFYVLEYLRDELKKGMIREEWGLILAFGPGITFEGMLVRGIN</sequence>
<name>PKS21_ORYSJ</name>
<gene>
    <name type="primary">PKS21</name>
    <name evidence="5" type="synonym">PKS1</name>
    <name evidence="10" type="ordered locus">Os10g0484800</name>
    <name evidence="9" type="ordered locus">LOC_Os10g34360</name>
    <name evidence="11" type="ORF">OsJ_31939</name>
    <name evidence="8" type="ORF">OSJNBa0029C15.7</name>
</gene>
<evidence type="ECO:0000250" key="1">
    <source>
        <dbReference type="UniProtKB" id="Q94FV7"/>
    </source>
</evidence>
<evidence type="ECO:0000269" key="2">
    <source>
    </source>
</evidence>
<evidence type="ECO:0000269" key="3">
    <source>
    </source>
</evidence>
<evidence type="ECO:0000269" key="4">
    <source>
    </source>
</evidence>
<evidence type="ECO:0000303" key="5">
    <source>
    </source>
</evidence>
<evidence type="ECO:0000303" key="6">
    <source>
    </source>
</evidence>
<evidence type="ECO:0000305" key="7"/>
<evidence type="ECO:0000312" key="8">
    <source>
        <dbReference type="EMBL" id="AAL59036.1"/>
    </source>
</evidence>
<evidence type="ECO:0000312" key="9">
    <source>
        <dbReference type="EMBL" id="AAP54339.1"/>
    </source>
</evidence>
<evidence type="ECO:0000312" key="10">
    <source>
        <dbReference type="EMBL" id="BAF26805.1"/>
    </source>
</evidence>
<evidence type="ECO:0000312" key="11">
    <source>
        <dbReference type="EMBL" id="EAZ16469.1"/>
    </source>
</evidence>
<reference key="1">
    <citation type="journal article" date="1996" name="Plant Mol. Biol.">
        <title>Isolation and characterization of two cDNA clones for mRNAs that are abundantly expressed in immature anthers of rice (Oryza sativa L.).</title>
        <authorList>
            <person name="Hihara Y."/>
            <person name="Hara C."/>
            <person name="Uchimiya H."/>
        </authorList>
    </citation>
    <scope>NUCLEOTIDE SEQUENCE [MRNA]</scope>
    <scope>TISSUE SPECIFICITY</scope>
    <source>
        <tissue>Anther</tissue>
    </source>
</reference>
<reference key="2">
    <citation type="journal article" date="2005" name="Plant Cell">
        <title>Functional isolation of novel nuclear proteins showing a variety of subnuclear localizations.</title>
        <authorList>
            <person name="Moriguchi K."/>
            <person name="Suzuki T."/>
            <person name="Ito Y."/>
            <person name="Yamazaki Y."/>
            <person name="Niwa Y."/>
            <person name="Kurata N."/>
        </authorList>
    </citation>
    <scope>NUCLEOTIDE SEQUENCE [MRNA]</scope>
    <source>
        <tissue>Panicle</tissue>
    </source>
</reference>
<reference key="3">
    <citation type="journal article" date="2003" name="Science">
        <title>In-depth view of structure, activity, and evolution of rice chromosome 10.</title>
        <authorList>
            <person name="Yu Y."/>
            <person name="Rambo T."/>
            <person name="Currie J."/>
            <person name="Saski C."/>
            <person name="Kim H.-R."/>
            <person name="Collura K."/>
            <person name="Thompson S."/>
            <person name="Simmons J."/>
            <person name="Yang T.-J."/>
            <person name="Nah G."/>
            <person name="Patel A.J."/>
            <person name="Thurmond S."/>
            <person name="Henry D."/>
            <person name="Oates R."/>
            <person name="Palmer M."/>
            <person name="Pries G."/>
            <person name="Gibson J."/>
            <person name="Anderson H."/>
            <person name="Paradkar M."/>
            <person name="Crane L."/>
            <person name="Dale J."/>
            <person name="Carver M.B."/>
            <person name="Wood T."/>
            <person name="Frisch D."/>
            <person name="Engler F."/>
            <person name="Soderlund C."/>
            <person name="Palmer L.E."/>
            <person name="Teytelman L."/>
            <person name="Nascimento L."/>
            <person name="De la Bastide M."/>
            <person name="Spiegel L."/>
            <person name="Ware D."/>
            <person name="O'Shaughnessy A."/>
            <person name="Dike S."/>
            <person name="Dedhia N."/>
            <person name="Preston R."/>
            <person name="Huang E."/>
            <person name="Ferraro K."/>
            <person name="Kuit K."/>
            <person name="Miller B."/>
            <person name="Zutavern T."/>
            <person name="Katzenberger F."/>
            <person name="Muller S."/>
            <person name="Balija V."/>
            <person name="Martienssen R.A."/>
            <person name="Stein L."/>
            <person name="Minx P."/>
            <person name="Johnson D."/>
            <person name="Cordum H."/>
            <person name="Mardis E."/>
            <person name="Cheng Z."/>
            <person name="Jiang J."/>
            <person name="Wilson R."/>
            <person name="McCombie W.R."/>
            <person name="Wing R.A."/>
            <person name="Yuan Q."/>
            <person name="Ouyang S."/>
            <person name="Liu J."/>
            <person name="Jones K.M."/>
            <person name="Gansberger K."/>
            <person name="Moffat K."/>
            <person name="Hill J."/>
            <person name="Tsitrin T."/>
            <person name="Overton L."/>
            <person name="Bera J."/>
            <person name="Kim M."/>
            <person name="Jin S."/>
            <person name="Tallon L."/>
            <person name="Ciecko A."/>
            <person name="Pai G."/>
            <person name="Van Aken S."/>
            <person name="Utterback T."/>
            <person name="Reidmuller S."/>
            <person name="Bormann J."/>
            <person name="Feldblyum T."/>
            <person name="Hsiao J."/>
            <person name="Zismann V."/>
            <person name="Blunt S."/>
            <person name="de Vazeille A.R."/>
            <person name="Shaffer T."/>
            <person name="Koo H."/>
            <person name="Suh B."/>
            <person name="Yang Q."/>
            <person name="Haas B."/>
            <person name="Peterson J."/>
            <person name="Pertea M."/>
            <person name="Volfovsky N."/>
            <person name="Wortman J."/>
            <person name="White O."/>
            <person name="Salzberg S.L."/>
            <person name="Fraser C.M."/>
            <person name="Buell C.R."/>
            <person name="Messing J."/>
            <person name="Song R."/>
            <person name="Fuks G."/>
            <person name="Llaca V."/>
            <person name="Kovchak S."/>
            <person name="Young S."/>
            <person name="Bowers J.E."/>
            <person name="Paterson A.H."/>
            <person name="Johns M.A."/>
            <person name="Mao L."/>
            <person name="Pan H."/>
            <person name="Dean R.A."/>
        </authorList>
    </citation>
    <scope>NUCLEOTIDE SEQUENCE [LARGE SCALE GENOMIC DNA]</scope>
    <source>
        <strain>cv. Nipponbare</strain>
    </source>
</reference>
<reference key="4">
    <citation type="journal article" date="2005" name="Nature">
        <title>The map-based sequence of the rice genome.</title>
        <authorList>
            <consortium name="International rice genome sequencing project (IRGSP)"/>
        </authorList>
    </citation>
    <scope>NUCLEOTIDE SEQUENCE [LARGE SCALE GENOMIC DNA]</scope>
    <source>
        <strain>cv. Nipponbare</strain>
    </source>
</reference>
<reference key="5">
    <citation type="journal article" date="2008" name="Nucleic Acids Res.">
        <title>The rice annotation project database (RAP-DB): 2008 update.</title>
        <authorList>
            <consortium name="The rice annotation project (RAP)"/>
        </authorList>
    </citation>
    <scope>GENOME REANNOTATION</scope>
    <source>
        <strain>cv. Nipponbare</strain>
    </source>
</reference>
<reference key="6">
    <citation type="journal article" date="2013" name="Rice">
        <title>Improvement of the Oryza sativa Nipponbare reference genome using next generation sequence and optical map data.</title>
        <authorList>
            <person name="Kawahara Y."/>
            <person name="de la Bastide M."/>
            <person name="Hamilton J.P."/>
            <person name="Kanamori H."/>
            <person name="McCombie W.R."/>
            <person name="Ouyang S."/>
            <person name="Schwartz D.C."/>
            <person name="Tanaka T."/>
            <person name="Wu J."/>
            <person name="Zhou S."/>
            <person name="Childs K.L."/>
            <person name="Davidson R.M."/>
            <person name="Lin H."/>
            <person name="Quesada-Ocampo L."/>
            <person name="Vaillancourt B."/>
            <person name="Sakai H."/>
            <person name="Lee S.S."/>
            <person name="Kim J."/>
            <person name="Numa H."/>
            <person name="Itoh T."/>
            <person name="Buell C.R."/>
            <person name="Matsumoto T."/>
        </authorList>
    </citation>
    <scope>GENOME REANNOTATION</scope>
    <source>
        <strain>cv. Nipponbare</strain>
    </source>
</reference>
<reference key="7">
    <citation type="journal article" date="2005" name="PLoS Biol.">
        <title>The genomes of Oryza sativa: a history of duplications.</title>
        <authorList>
            <person name="Yu J."/>
            <person name="Wang J."/>
            <person name="Lin W."/>
            <person name="Li S."/>
            <person name="Li H."/>
            <person name="Zhou J."/>
            <person name="Ni P."/>
            <person name="Dong W."/>
            <person name="Hu S."/>
            <person name="Zeng C."/>
            <person name="Zhang J."/>
            <person name="Zhang Y."/>
            <person name="Li R."/>
            <person name="Xu Z."/>
            <person name="Li S."/>
            <person name="Li X."/>
            <person name="Zheng H."/>
            <person name="Cong L."/>
            <person name="Lin L."/>
            <person name="Yin J."/>
            <person name="Geng J."/>
            <person name="Li G."/>
            <person name="Shi J."/>
            <person name="Liu J."/>
            <person name="Lv H."/>
            <person name="Li J."/>
            <person name="Wang J."/>
            <person name="Deng Y."/>
            <person name="Ran L."/>
            <person name="Shi X."/>
            <person name="Wang X."/>
            <person name="Wu Q."/>
            <person name="Li C."/>
            <person name="Ren X."/>
            <person name="Wang J."/>
            <person name="Wang X."/>
            <person name="Li D."/>
            <person name="Liu D."/>
            <person name="Zhang X."/>
            <person name="Ji Z."/>
            <person name="Zhao W."/>
            <person name="Sun Y."/>
            <person name="Zhang Z."/>
            <person name="Bao J."/>
            <person name="Han Y."/>
            <person name="Dong L."/>
            <person name="Ji J."/>
            <person name="Chen P."/>
            <person name="Wu S."/>
            <person name="Liu J."/>
            <person name="Xiao Y."/>
            <person name="Bu D."/>
            <person name="Tan J."/>
            <person name="Yang L."/>
            <person name="Ye C."/>
            <person name="Zhang J."/>
            <person name="Xu J."/>
            <person name="Zhou Y."/>
            <person name="Yu Y."/>
            <person name="Zhang B."/>
            <person name="Zhuang S."/>
            <person name="Wei H."/>
            <person name="Liu B."/>
            <person name="Lei M."/>
            <person name="Yu H."/>
            <person name="Li Y."/>
            <person name="Xu H."/>
            <person name="Wei S."/>
            <person name="He X."/>
            <person name="Fang L."/>
            <person name="Zhang Z."/>
            <person name="Zhang Y."/>
            <person name="Huang X."/>
            <person name="Su Z."/>
            <person name="Tong W."/>
            <person name="Li J."/>
            <person name="Tong Z."/>
            <person name="Li S."/>
            <person name="Ye J."/>
            <person name="Wang L."/>
            <person name="Fang L."/>
            <person name="Lei T."/>
            <person name="Chen C.-S."/>
            <person name="Chen H.-C."/>
            <person name="Xu Z."/>
            <person name="Li H."/>
            <person name="Huang H."/>
            <person name="Zhang F."/>
            <person name="Xu H."/>
            <person name="Li N."/>
            <person name="Zhao C."/>
            <person name="Li S."/>
            <person name="Dong L."/>
            <person name="Huang Y."/>
            <person name="Li L."/>
            <person name="Xi Y."/>
            <person name="Qi Q."/>
            <person name="Li W."/>
            <person name="Zhang B."/>
            <person name="Hu W."/>
            <person name="Zhang Y."/>
            <person name="Tian X."/>
            <person name="Jiao Y."/>
            <person name="Liang X."/>
            <person name="Jin J."/>
            <person name="Gao L."/>
            <person name="Zheng W."/>
            <person name="Hao B."/>
            <person name="Liu S.-M."/>
            <person name="Wang W."/>
            <person name="Yuan L."/>
            <person name="Cao M."/>
            <person name="McDermott J."/>
            <person name="Samudrala R."/>
            <person name="Wang J."/>
            <person name="Wong G.K.-S."/>
            <person name="Yang H."/>
        </authorList>
    </citation>
    <scope>NUCLEOTIDE SEQUENCE [LARGE SCALE GENOMIC DNA]</scope>
    <source>
        <strain>cv. Nipponbare</strain>
    </source>
</reference>
<reference key="8">
    <citation type="journal article" date="2017" name="J. Plant Res.">
        <title>Genome-wide identification and phylogenetic analysis of the chalcone synthase gene family in rice.</title>
        <authorList>
            <person name="Hu L."/>
            <person name="He H."/>
            <person name="Zhu C."/>
            <person name="Peng X."/>
            <person name="Fu J."/>
            <person name="He X."/>
            <person name="Chen X."/>
            <person name="Ouyang L."/>
            <person name="Bian J."/>
            <person name="Liu S."/>
        </authorList>
    </citation>
    <scope>GENE FAMILY</scope>
    <scope>NOMENCLATURE</scope>
    <scope>TISSUE SPECIFICITY</scope>
</reference>
<reference key="9">
    <citation type="journal article" date="2013" name="Physiol. Plantarum">
        <title>Conserved metabolic steps for sporopollenin precursor formation in tobacco and rice.</title>
        <authorList>
            <person name="Wang Y."/>
            <person name="Lin Y.C."/>
            <person name="So J."/>
            <person name="Du Y."/>
            <person name="Lo C."/>
        </authorList>
    </citation>
    <scope>FUNCTION</scope>
    <scope>CATALYTIC ACTIVITY</scope>
    <scope>DISRUPTION PHENOTYPE</scope>
</reference>
<feature type="chain" id="PRO_0000462179" description="Type III polyketide synthase 21">
    <location>
        <begin position="1"/>
        <end position="389"/>
    </location>
</feature>
<feature type="active site" description="Nucleophile" evidence="1">
    <location>
        <position position="170"/>
    </location>
</feature>
<dbReference type="EC" id="2.3.1.-" evidence="2"/>
<dbReference type="EMBL" id="D50576">
    <property type="protein sequence ID" value="BAA23618.1"/>
    <property type="molecule type" value="mRNA"/>
</dbReference>
<dbReference type="EMBL" id="AB110182">
    <property type="protein sequence ID" value="BAC78574.1"/>
    <property type="molecule type" value="mRNA"/>
</dbReference>
<dbReference type="EMBL" id="AC087182">
    <property type="protein sequence ID" value="AAL59036.1"/>
    <property type="molecule type" value="Genomic_DNA"/>
</dbReference>
<dbReference type="EMBL" id="DP000086">
    <property type="protein sequence ID" value="AAP54339.1"/>
    <property type="molecule type" value="Genomic_DNA"/>
</dbReference>
<dbReference type="EMBL" id="AP008216">
    <property type="protein sequence ID" value="BAF26805.1"/>
    <property type="molecule type" value="Genomic_DNA"/>
</dbReference>
<dbReference type="EMBL" id="AP014966">
    <property type="protein sequence ID" value="BAT11371.1"/>
    <property type="molecule type" value="Genomic_DNA"/>
</dbReference>
<dbReference type="EMBL" id="CM000147">
    <property type="protein sequence ID" value="EAZ16469.1"/>
    <property type="molecule type" value="Genomic_DNA"/>
</dbReference>
<dbReference type="EMBL" id="AK105510">
    <property type="protein sequence ID" value="BAG97274.1"/>
    <property type="molecule type" value="mRNA"/>
</dbReference>
<dbReference type="PIR" id="T02970">
    <property type="entry name" value="T02970"/>
</dbReference>
<dbReference type="RefSeq" id="XP_015614404.1">
    <property type="nucleotide sequence ID" value="XM_015758918.1"/>
</dbReference>
<dbReference type="SMR" id="A3C5V6"/>
<dbReference type="EnsemblPlants" id="Os10t0484800-01">
    <property type="protein sequence ID" value="Os10t0484800-01"/>
    <property type="gene ID" value="Os10g0484800"/>
</dbReference>
<dbReference type="Gramene" id="Os10t0484800-01">
    <property type="protein sequence ID" value="Os10t0484800-01"/>
    <property type="gene ID" value="Os10g0484800"/>
</dbReference>
<dbReference type="KEGG" id="dosa:Os10g0484800"/>
<dbReference type="KEGG" id="osa:4348937"/>
<dbReference type="OMA" id="AYIEVAT"/>
<dbReference type="OrthoDB" id="883077at2759"/>
<dbReference type="Proteomes" id="UP000000763">
    <property type="component" value="Chromosome 10"/>
</dbReference>
<dbReference type="Proteomes" id="UP000007752">
    <property type="component" value="Chromosome 10"/>
</dbReference>
<dbReference type="Proteomes" id="UP000059680">
    <property type="component" value="Chromosome 10"/>
</dbReference>
<dbReference type="GO" id="GO:0016747">
    <property type="term" value="F:acyltransferase activity, transferring groups other than amino-acyl groups"/>
    <property type="evidence" value="ECO:0000318"/>
    <property type="project" value="GO_Central"/>
</dbReference>
<dbReference type="GO" id="GO:0090439">
    <property type="term" value="F:tetraketide alpha-pyrone synthase activity"/>
    <property type="evidence" value="ECO:0000314"/>
    <property type="project" value="UniProtKB"/>
</dbReference>
<dbReference type="GO" id="GO:0009813">
    <property type="term" value="P:flavonoid biosynthetic process"/>
    <property type="evidence" value="ECO:0007669"/>
    <property type="project" value="UniProtKB-ARBA"/>
</dbReference>
<dbReference type="GO" id="GO:0010208">
    <property type="term" value="P:pollen wall assembly"/>
    <property type="evidence" value="ECO:0000315"/>
    <property type="project" value="UniProtKB"/>
</dbReference>
<dbReference type="GO" id="GO:0030639">
    <property type="term" value="P:polyketide biosynthetic process"/>
    <property type="evidence" value="ECO:0000314"/>
    <property type="project" value="UniProtKB"/>
</dbReference>
<dbReference type="CDD" id="cd00831">
    <property type="entry name" value="CHS_like"/>
    <property type="match status" value="1"/>
</dbReference>
<dbReference type="FunFam" id="3.40.47.10:FF:000014">
    <property type="entry name" value="Chalcone synthase 1"/>
    <property type="match status" value="1"/>
</dbReference>
<dbReference type="FunFam" id="3.40.47.10:FF:000025">
    <property type="entry name" value="Chalcone synthase 2"/>
    <property type="match status" value="1"/>
</dbReference>
<dbReference type="Gene3D" id="3.40.47.10">
    <property type="match status" value="2"/>
</dbReference>
<dbReference type="InterPro" id="IPR012328">
    <property type="entry name" value="Chalcone/stilbene_synt_C"/>
</dbReference>
<dbReference type="InterPro" id="IPR001099">
    <property type="entry name" value="Chalcone/stilbene_synt_N"/>
</dbReference>
<dbReference type="InterPro" id="IPR011141">
    <property type="entry name" value="Polyketide_synthase_type-III"/>
</dbReference>
<dbReference type="InterPro" id="IPR016039">
    <property type="entry name" value="Thiolase-like"/>
</dbReference>
<dbReference type="PANTHER" id="PTHR11877">
    <property type="entry name" value="HYDROXYMETHYLGLUTARYL-COA SYNTHASE"/>
    <property type="match status" value="1"/>
</dbReference>
<dbReference type="PANTHER" id="PTHR11877:SF46">
    <property type="entry name" value="TYPE III POLYKETIDE SYNTHASE A"/>
    <property type="match status" value="1"/>
</dbReference>
<dbReference type="Pfam" id="PF02797">
    <property type="entry name" value="Chal_sti_synt_C"/>
    <property type="match status" value="1"/>
</dbReference>
<dbReference type="Pfam" id="PF00195">
    <property type="entry name" value="Chal_sti_synt_N"/>
    <property type="match status" value="1"/>
</dbReference>
<dbReference type="PIRSF" id="PIRSF000451">
    <property type="entry name" value="PKS_III"/>
    <property type="match status" value="1"/>
</dbReference>
<dbReference type="SUPFAM" id="SSF53901">
    <property type="entry name" value="Thiolase-like"/>
    <property type="match status" value="2"/>
</dbReference>